<sequence>MGFTLAIVGRPNVGKSTLFNRLVGRKLALVDDLPGVTRDRRIHDAKLYDLKFQVIDTAGLEEAANDSLEARMRAQTEAAISEADAVLFVIDAKAGITPADSTFAEAVRRSGKPVVLVANKAEARGSEAGMYDAFQLGLGEPCPISAEHGQGMPDLRDAIVELLGEERVFAEERQEEAADEVFTPAAVGALVGDDIEDPDAEEIPAYDATKPLRIAIVGRPNAGKSTLINTMLGEDRLLTGPEAGITRDSISADWEWHGRKIKLFDTAGMRRKARVQEKLEKLSVADSLRAIRFAEVVIIVLDATIPFEKQDLQIADLIIREGRAPVIAFNKWDLIEDRQMVLADLYEKTARLLPQVRGLRAVPISGERGQGIDKLMENVVKTHEIWNRRISTGRLNRWLEGVIAHQPPPAVSGRRLKVKYMTQVKTRPPGFVVSCSRPDAMPQSYVRYLINGLRETFDMPGVPIRLSLRTSDNPFAGRAKKKK</sequence>
<name>DER_BRUME</name>
<keyword id="KW-0342">GTP-binding</keyword>
<keyword id="KW-0547">Nucleotide-binding</keyword>
<keyword id="KW-0677">Repeat</keyword>
<keyword id="KW-0690">Ribosome biogenesis</keyword>
<protein>
    <recommendedName>
        <fullName evidence="1">GTPase Der</fullName>
    </recommendedName>
    <alternativeName>
        <fullName evidence="1">GTP-binding protein EngA</fullName>
    </alternativeName>
</protein>
<reference key="1">
    <citation type="journal article" date="2002" name="Proc. Natl. Acad. Sci. U.S.A.">
        <title>The genome sequence of the facultative intracellular pathogen Brucella melitensis.</title>
        <authorList>
            <person name="DelVecchio V.G."/>
            <person name="Kapatral V."/>
            <person name="Redkar R.J."/>
            <person name="Patra G."/>
            <person name="Mujer C."/>
            <person name="Los T."/>
            <person name="Ivanova N."/>
            <person name="Anderson I."/>
            <person name="Bhattacharyya A."/>
            <person name="Lykidis A."/>
            <person name="Reznik G."/>
            <person name="Jablonski L."/>
            <person name="Larsen N."/>
            <person name="D'Souza M."/>
            <person name="Bernal A."/>
            <person name="Mazur M."/>
            <person name="Goltsman E."/>
            <person name="Selkov E."/>
            <person name="Elzer P.H."/>
            <person name="Hagius S."/>
            <person name="O'Callaghan D."/>
            <person name="Letesson J.-J."/>
            <person name="Haselkorn R."/>
            <person name="Kyrpides N.C."/>
            <person name="Overbeek R."/>
        </authorList>
    </citation>
    <scope>NUCLEOTIDE SEQUENCE [LARGE SCALE GENOMIC DNA]</scope>
    <source>
        <strain>ATCC 23456 / CCUG 17765 / NCTC 10094 / 16M</strain>
    </source>
</reference>
<comment type="function">
    <text evidence="1">GTPase that plays an essential role in the late steps of ribosome biogenesis.</text>
</comment>
<comment type="subunit">
    <text evidence="1">Associates with the 50S ribosomal subunit.</text>
</comment>
<comment type="similarity">
    <text evidence="1">Belongs to the TRAFAC class TrmE-Era-EngA-EngB-Septin-like GTPase superfamily. EngA (Der) GTPase family.</text>
</comment>
<evidence type="ECO:0000255" key="1">
    <source>
        <dbReference type="HAMAP-Rule" id="MF_00195"/>
    </source>
</evidence>
<gene>
    <name evidence="1" type="primary">der</name>
    <name type="synonym">engA</name>
    <name type="ordered locus">BMEI1550</name>
</gene>
<organism>
    <name type="scientific">Brucella melitensis biotype 1 (strain ATCC 23456 / CCUG 17765 / NCTC 10094 / 16M)</name>
    <dbReference type="NCBI Taxonomy" id="224914"/>
    <lineage>
        <taxon>Bacteria</taxon>
        <taxon>Pseudomonadati</taxon>
        <taxon>Pseudomonadota</taxon>
        <taxon>Alphaproteobacteria</taxon>
        <taxon>Hyphomicrobiales</taxon>
        <taxon>Brucellaceae</taxon>
        <taxon>Brucella/Ochrobactrum group</taxon>
        <taxon>Brucella</taxon>
    </lineage>
</organism>
<proteinExistence type="inferred from homology"/>
<accession>Q8YFH2</accession>
<dbReference type="EMBL" id="AE008917">
    <property type="protein sequence ID" value="AAL52731.1"/>
    <property type="molecule type" value="Genomic_DNA"/>
</dbReference>
<dbReference type="PIR" id="AH3445">
    <property type="entry name" value="AH3445"/>
</dbReference>
<dbReference type="RefSeq" id="WP_004682999.1">
    <property type="nucleotide sequence ID" value="NZ_GG703778.1"/>
</dbReference>
<dbReference type="SMR" id="Q8YFH2"/>
<dbReference type="GeneID" id="29594398"/>
<dbReference type="KEGG" id="bme:BMEI1550"/>
<dbReference type="KEGG" id="bmel:DK63_1943"/>
<dbReference type="PATRIC" id="fig|224914.52.peg.2044"/>
<dbReference type="eggNOG" id="COG1160">
    <property type="taxonomic scope" value="Bacteria"/>
</dbReference>
<dbReference type="PhylomeDB" id="Q8YFH2"/>
<dbReference type="Proteomes" id="UP000000419">
    <property type="component" value="Chromosome I"/>
</dbReference>
<dbReference type="GO" id="GO:0005525">
    <property type="term" value="F:GTP binding"/>
    <property type="evidence" value="ECO:0007669"/>
    <property type="project" value="UniProtKB-UniRule"/>
</dbReference>
<dbReference type="GO" id="GO:0042254">
    <property type="term" value="P:ribosome biogenesis"/>
    <property type="evidence" value="ECO:0007669"/>
    <property type="project" value="UniProtKB-KW"/>
</dbReference>
<dbReference type="CDD" id="cd01894">
    <property type="entry name" value="EngA1"/>
    <property type="match status" value="1"/>
</dbReference>
<dbReference type="CDD" id="cd01895">
    <property type="entry name" value="EngA2"/>
    <property type="match status" value="1"/>
</dbReference>
<dbReference type="FunFam" id="3.30.300.20:FF:000004">
    <property type="entry name" value="GTPase Der"/>
    <property type="match status" value="1"/>
</dbReference>
<dbReference type="FunFam" id="3.40.50.300:FF:000057">
    <property type="entry name" value="GTPase Der"/>
    <property type="match status" value="1"/>
</dbReference>
<dbReference type="Gene3D" id="3.30.300.20">
    <property type="match status" value="1"/>
</dbReference>
<dbReference type="Gene3D" id="3.40.50.300">
    <property type="entry name" value="P-loop containing nucleotide triphosphate hydrolases"/>
    <property type="match status" value="2"/>
</dbReference>
<dbReference type="HAMAP" id="MF_00195">
    <property type="entry name" value="GTPase_Der"/>
    <property type="match status" value="1"/>
</dbReference>
<dbReference type="InterPro" id="IPR031166">
    <property type="entry name" value="G_ENGA"/>
</dbReference>
<dbReference type="InterPro" id="IPR006073">
    <property type="entry name" value="GTP-bd"/>
</dbReference>
<dbReference type="InterPro" id="IPR016484">
    <property type="entry name" value="GTPase_Der"/>
</dbReference>
<dbReference type="InterPro" id="IPR032859">
    <property type="entry name" value="KH_dom-like"/>
</dbReference>
<dbReference type="InterPro" id="IPR015946">
    <property type="entry name" value="KH_dom-like_a/b"/>
</dbReference>
<dbReference type="InterPro" id="IPR027417">
    <property type="entry name" value="P-loop_NTPase"/>
</dbReference>
<dbReference type="InterPro" id="IPR005225">
    <property type="entry name" value="Small_GTP-bd"/>
</dbReference>
<dbReference type="NCBIfam" id="TIGR03594">
    <property type="entry name" value="GTPase_EngA"/>
    <property type="match status" value="1"/>
</dbReference>
<dbReference type="NCBIfam" id="TIGR00231">
    <property type="entry name" value="small_GTP"/>
    <property type="match status" value="2"/>
</dbReference>
<dbReference type="PANTHER" id="PTHR43834">
    <property type="entry name" value="GTPASE DER"/>
    <property type="match status" value="1"/>
</dbReference>
<dbReference type="PANTHER" id="PTHR43834:SF6">
    <property type="entry name" value="GTPASE DER"/>
    <property type="match status" value="1"/>
</dbReference>
<dbReference type="Pfam" id="PF14714">
    <property type="entry name" value="KH_dom-like"/>
    <property type="match status" value="1"/>
</dbReference>
<dbReference type="Pfam" id="PF01926">
    <property type="entry name" value="MMR_HSR1"/>
    <property type="match status" value="2"/>
</dbReference>
<dbReference type="PIRSF" id="PIRSF006485">
    <property type="entry name" value="GTP-binding_EngA"/>
    <property type="match status" value="1"/>
</dbReference>
<dbReference type="PRINTS" id="PR00326">
    <property type="entry name" value="GTP1OBG"/>
</dbReference>
<dbReference type="SUPFAM" id="SSF52540">
    <property type="entry name" value="P-loop containing nucleoside triphosphate hydrolases"/>
    <property type="match status" value="2"/>
</dbReference>
<dbReference type="PROSITE" id="PS51712">
    <property type="entry name" value="G_ENGA"/>
    <property type="match status" value="2"/>
</dbReference>
<feature type="chain" id="PRO_0000178972" description="GTPase Der">
    <location>
        <begin position="1"/>
        <end position="483"/>
    </location>
</feature>
<feature type="domain" description="EngA-type G 1">
    <location>
        <begin position="3"/>
        <end position="167"/>
    </location>
</feature>
<feature type="domain" description="EngA-type G 2">
    <location>
        <begin position="212"/>
        <end position="387"/>
    </location>
</feature>
<feature type="domain" description="KH-like" evidence="1">
    <location>
        <begin position="388"/>
        <end position="472"/>
    </location>
</feature>
<feature type="binding site" evidence="1">
    <location>
        <begin position="9"/>
        <end position="16"/>
    </location>
    <ligand>
        <name>GTP</name>
        <dbReference type="ChEBI" id="CHEBI:37565"/>
        <label>1</label>
    </ligand>
</feature>
<feature type="binding site" evidence="1">
    <location>
        <begin position="56"/>
        <end position="60"/>
    </location>
    <ligand>
        <name>GTP</name>
        <dbReference type="ChEBI" id="CHEBI:37565"/>
        <label>1</label>
    </ligand>
</feature>
<feature type="binding site" evidence="1">
    <location>
        <begin position="119"/>
        <end position="122"/>
    </location>
    <ligand>
        <name>GTP</name>
        <dbReference type="ChEBI" id="CHEBI:37565"/>
        <label>1</label>
    </ligand>
</feature>
<feature type="binding site" evidence="1">
    <location>
        <begin position="218"/>
        <end position="225"/>
    </location>
    <ligand>
        <name>GTP</name>
        <dbReference type="ChEBI" id="CHEBI:37565"/>
        <label>2</label>
    </ligand>
</feature>
<feature type="binding site" evidence="1">
    <location>
        <begin position="265"/>
        <end position="269"/>
    </location>
    <ligand>
        <name>GTP</name>
        <dbReference type="ChEBI" id="CHEBI:37565"/>
        <label>2</label>
    </ligand>
</feature>
<feature type="binding site" evidence="1">
    <location>
        <begin position="330"/>
        <end position="333"/>
    </location>
    <ligand>
        <name>GTP</name>
        <dbReference type="ChEBI" id="CHEBI:37565"/>
        <label>2</label>
    </ligand>
</feature>